<protein>
    <recommendedName>
        <fullName evidence="1">Large ribosomal subunit protein bL17</fullName>
    </recommendedName>
    <alternativeName>
        <fullName evidence="2">50S ribosomal protein L17</fullName>
    </alternativeName>
</protein>
<reference key="1">
    <citation type="journal article" date="2006" name="PLoS Genet.">
        <title>Who ate whom? Adaptive Helicobacter genomic changes that accompanied a host jump from early humans to large felines.</title>
        <authorList>
            <person name="Eppinger M."/>
            <person name="Baar C."/>
            <person name="Linz B."/>
            <person name="Raddatz G."/>
            <person name="Lanz C."/>
            <person name="Keller H."/>
            <person name="Morelli G."/>
            <person name="Gressmann H."/>
            <person name="Achtman M."/>
            <person name="Schuster S.C."/>
        </authorList>
    </citation>
    <scope>NUCLEOTIDE SEQUENCE [LARGE SCALE GENOMIC DNA]</scope>
    <source>
        <strain>Sheeba</strain>
    </source>
</reference>
<name>RL17_HELAH</name>
<gene>
    <name evidence="1" type="primary">rplQ</name>
    <name type="ordered locus">Hac_0161</name>
</gene>
<organism>
    <name type="scientific">Helicobacter acinonychis (strain Sheeba)</name>
    <dbReference type="NCBI Taxonomy" id="382638"/>
    <lineage>
        <taxon>Bacteria</taxon>
        <taxon>Pseudomonadati</taxon>
        <taxon>Campylobacterota</taxon>
        <taxon>Epsilonproteobacteria</taxon>
        <taxon>Campylobacterales</taxon>
        <taxon>Helicobacteraceae</taxon>
        <taxon>Helicobacter</taxon>
    </lineage>
</organism>
<proteinExistence type="inferred from homology"/>
<keyword id="KW-0687">Ribonucleoprotein</keyword>
<keyword id="KW-0689">Ribosomal protein</keyword>
<feature type="chain" id="PRO_1000055840" description="Large ribosomal subunit protein bL17">
    <location>
        <begin position="1"/>
        <end position="116"/>
    </location>
</feature>
<sequence length="116" mass="13349">MRHKHGYRKLGRTSSHRKALLKNLAIALIEHNKIETGIYKAKELRSYIEKLTTVARVGDFNAHRHVFAYLQNKEATHKLVTEIAPKYAQRNGGYTRIQRTTFRIGDASTLATIEFV</sequence>
<evidence type="ECO:0000255" key="1">
    <source>
        <dbReference type="HAMAP-Rule" id="MF_01368"/>
    </source>
</evidence>
<evidence type="ECO:0000305" key="2"/>
<accession>Q17ZB3</accession>
<dbReference type="EMBL" id="AM260522">
    <property type="protein sequence ID" value="CAJ99013.1"/>
    <property type="molecule type" value="Genomic_DNA"/>
</dbReference>
<dbReference type="RefSeq" id="WP_011577129.1">
    <property type="nucleotide sequence ID" value="NC_008229.1"/>
</dbReference>
<dbReference type="SMR" id="Q17ZB3"/>
<dbReference type="STRING" id="382638.Hac_0161"/>
<dbReference type="GeneID" id="31757692"/>
<dbReference type="KEGG" id="hac:Hac_0161"/>
<dbReference type="eggNOG" id="COG0203">
    <property type="taxonomic scope" value="Bacteria"/>
</dbReference>
<dbReference type="HOGENOM" id="CLU_074407_2_0_7"/>
<dbReference type="OrthoDB" id="9809073at2"/>
<dbReference type="BioCyc" id="HACI382638:HAC_RS00715-MONOMER"/>
<dbReference type="Proteomes" id="UP000000775">
    <property type="component" value="Chromosome"/>
</dbReference>
<dbReference type="GO" id="GO:0022625">
    <property type="term" value="C:cytosolic large ribosomal subunit"/>
    <property type="evidence" value="ECO:0007669"/>
    <property type="project" value="TreeGrafter"/>
</dbReference>
<dbReference type="GO" id="GO:0003735">
    <property type="term" value="F:structural constituent of ribosome"/>
    <property type="evidence" value="ECO:0007669"/>
    <property type="project" value="InterPro"/>
</dbReference>
<dbReference type="GO" id="GO:0006412">
    <property type="term" value="P:translation"/>
    <property type="evidence" value="ECO:0007669"/>
    <property type="project" value="UniProtKB-UniRule"/>
</dbReference>
<dbReference type="FunFam" id="3.90.1030.10:FF:000003">
    <property type="entry name" value="50S ribosomal protein L17"/>
    <property type="match status" value="1"/>
</dbReference>
<dbReference type="Gene3D" id="3.90.1030.10">
    <property type="entry name" value="Ribosomal protein L17"/>
    <property type="match status" value="1"/>
</dbReference>
<dbReference type="HAMAP" id="MF_01368">
    <property type="entry name" value="Ribosomal_bL17"/>
    <property type="match status" value="1"/>
</dbReference>
<dbReference type="InterPro" id="IPR000456">
    <property type="entry name" value="Ribosomal_bL17"/>
</dbReference>
<dbReference type="InterPro" id="IPR047859">
    <property type="entry name" value="Ribosomal_bL17_CS"/>
</dbReference>
<dbReference type="InterPro" id="IPR036373">
    <property type="entry name" value="Ribosomal_bL17_sf"/>
</dbReference>
<dbReference type="NCBIfam" id="TIGR00059">
    <property type="entry name" value="L17"/>
    <property type="match status" value="1"/>
</dbReference>
<dbReference type="PANTHER" id="PTHR14413:SF16">
    <property type="entry name" value="LARGE RIBOSOMAL SUBUNIT PROTEIN BL17M"/>
    <property type="match status" value="1"/>
</dbReference>
<dbReference type="PANTHER" id="PTHR14413">
    <property type="entry name" value="RIBOSOMAL PROTEIN L17"/>
    <property type="match status" value="1"/>
</dbReference>
<dbReference type="Pfam" id="PF01196">
    <property type="entry name" value="Ribosomal_L17"/>
    <property type="match status" value="1"/>
</dbReference>
<dbReference type="SUPFAM" id="SSF64263">
    <property type="entry name" value="Prokaryotic ribosomal protein L17"/>
    <property type="match status" value="1"/>
</dbReference>
<dbReference type="PROSITE" id="PS01167">
    <property type="entry name" value="RIBOSOMAL_L17"/>
    <property type="match status" value="1"/>
</dbReference>
<comment type="subunit">
    <text evidence="1">Part of the 50S ribosomal subunit. Contacts protein L32.</text>
</comment>
<comment type="similarity">
    <text evidence="1">Belongs to the bacterial ribosomal protein bL17 family.</text>
</comment>